<name>LST4_KLULA</name>
<evidence type="ECO:0000250" key="1"/>
<evidence type="ECO:0000255" key="2">
    <source>
        <dbReference type="PROSITE-ProRule" id="PRU01180"/>
    </source>
</evidence>
<evidence type="ECO:0000256" key="3">
    <source>
        <dbReference type="SAM" id="MobiDB-lite"/>
    </source>
</evidence>
<evidence type="ECO:0000305" key="4"/>
<evidence type="ECO:0007829" key="5">
    <source>
        <dbReference type="PDB" id="4ZY8"/>
    </source>
</evidence>
<sequence length="714" mass="80951">MLGRLLRTSSLSEFVPFGSSNVTVGEEVFQNEPFYMTDDLKTLLYGTRDKALFERIANDRLHNGGFRLIISQELGHVTSRNNYQVVLDHSSVNFHTGAHIPLNELKDYIFGSSIRTIDYSASSDKIKVVKSANIVLFTRIFYLNEKSTLRIAISCCVTDDVLPVLTECWPHISSFLDQCENTLLKYLAKNDTQFLPHDWKARNCIEVAAVLQTFQRKIIPLLSGYSDTPRLFLYPMDSIPYIKTWVKYVTNWIELKDGPRVRFLPILLAKLRYDFASLLKENSNTRIVILTGNMNVANRLIFILTAFLGPHFRGTLHKSINSQGCPSPAGRKMSNMSGASDFPFELKPSNSSITETNKGWEIPRIKRDPTFSVTSVSSDETGVQTFIQPSSLKSGASSVQYLSSSLNSAYGSYGSWFKKVAQSPSSRSNESSHEVPPILHRNSSSTSFHQQAVLGNINGSQRVTPQPSPTIAEYEEYPWFSPSPIARDQPRPEKRIPTPISSYTTEKERRTHLQSEIYDVDMKRTVNRLIDEDSLNDAFADLVIDPPSYDTTVSNEKHGEIVEVNMASPRKQRNNQNQELLRRFTSYTPHYNQWFQLQACQITTESENKVIHSMKRDLTYADQDPCKKDKSTSTLLISLRSREIKQVTIVRDTNNRFIQRTKKILQNGKVGPVSRAMLSGIETTDQHLKKLMECNNDNEALVSLFNDIVTCAST</sequence>
<accession>Q6CXP4</accession>
<reference key="1">
    <citation type="journal article" date="2004" name="Nature">
        <title>Genome evolution in yeasts.</title>
        <authorList>
            <person name="Dujon B."/>
            <person name="Sherman D."/>
            <person name="Fischer G."/>
            <person name="Durrens P."/>
            <person name="Casaregola S."/>
            <person name="Lafontaine I."/>
            <person name="de Montigny J."/>
            <person name="Marck C."/>
            <person name="Neuveglise C."/>
            <person name="Talla E."/>
            <person name="Goffard N."/>
            <person name="Frangeul L."/>
            <person name="Aigle M."/>
            <person name="Anthouard V."/>
            <person name="Babour A."/>
            <person name="Barbe V."/>
            <person name="Barnay S."/>
            <person name="Blanchin S."/>
            <person name="Beckerich J.-M."/>
            <person name="Beyne E."/>
            <person name="Bleykasten C."/>
            <person name="Boisrame A."/>
            <person name="Boyer J."/>
            <person name="Cattolico L."/>
            <person name="Confanioleri F."/>
            <person name="de Daruvar A."/>
            <person name="Despons L."/>
            <person name="Fabre E."/>
            <person name="Fairhead C."/>
            <person name="Ferry-Dumazet H."/>
            <person name="Groppi A."/>
            <person name="Hantraye F."/>
            <person name="Hennequin C."/>
            <person name="Jauniaux N."/>
            <person name="Joyet P."/>
            <person name="Kachouri R."/>
            <person name="Kerrest A."/>
            <person name="Koszul R."/>
            <person name="Lemaire M."/>
            <person name="Lesur I."/>
            <person name="Ma L."/>
            <person name="Muller H."/>
            <person name="Nicaud J.-M."/>
            <person name="Nikolski M."/>
            <person name="Oztas S."/>
            <person name="Ozier-Kalogeropoulos O."/>
            <person name="Pellenz S."/>
            <person name="Potier S."/>
            <person name="Richard G.-F."/>
            <person name="Straub M.-L."/>
            <person name="Suleau A."/>
            <person name="Swennen D."/>
            <person name="Tekaia F."/>
            <person name="Wesolowski-Louvel M."/>
            <person name="Westhof E."/>
            <person name="Wirth B."/>
            <person name="Zeniou-Meyer M."/>
            <person name="Zivanovic Y."/>
            <person name="Bolotin-Fukuhara M."/>
            <person name="Thierry A."/>
            <person name="Bouchier C."/>
            <person name="Caudron B."/>
            <person name="Scarpelli C."/>
            <person name="Gaillardin C."/>
            <person name="Weissenbach J."/>
            <person name="Wincker P."/>
            <person name="Souciet J.-L."/>
        </authorList>
    </citation>
    <scope>NUCLEOTIDE SEQUENCE [LARGE SCALE GENOMIC DNA]</scope>
    <source>
        <strain>ATCC 8585 / CBS 2359 / DSM 70799 / NBRC 1267 / NRRL Y-1140 / WM37</strain>
    </source>
</reference>
<keyword id="KW-0002">3D-structure</keyword>
<keyword id="KW-0029">Amino-acid transport</keyword>
<keyword id="KW-0653">Protein transport</keyword>
<keyword id="KW-1185">Reference proteome</keyword>
<keyword id="KW-0813">Transport</keyword>
<feature type="chain" id="PRO_0000324406" description="Protein LST4">
    <location>
        <begin position="1"/>
        <end position="714"/>
    </location>
</feature>
<feature type="domain" description="uDENN FNIP1/2-type" evidence="2">
    <location>
        <begin position="61"/>
        <end position="236"/>
    </location>
</feature>
<feature type="domain" description="cDENN FNIP1/2-type" evidence="2">
    <location>
        <begin position="244"/>
        <end position="620"/>
    </location>
</feature>
<feature type="domain" description="dDENN FNIP1/2-type" evidence="2">
    <location>
        <begin position="634"/>
        <end position="712"/>
    </location>
</feature>
<feature type="region of interest" description="Disordered" evidence="3">
    <location>
        <begin position="423"/>
        <end position="447"/>
    </location>
</feature>
<feature type="strand" evidence="5">
    <location>
        <begin position="67"/>
        <end position="72"/>
    </location>
</feature>
<feature type="strand" evidence="5">
    <location>
        <begin position="84"/>
        <end position="90"/>
    </location>
</feature>
<feature type="helix" evidence="5">
    <location>
        <begin position="102"/>
        <end position="110"/>
    </location>
</feature>
<feature type="strand" evidence="5">
    <location>
        <begin position="123"/>
        <end position="129"/>
    </location>
</feature>
<feature type="helix" evidence="5">
    <location>
        <begin position="130"/>
        <end position="132"/>
    </location>
</feature>
<feature type="strand" evidence="5">
    <location>
        <begin position="134"/>
        <end position="144"/>
    </location>
</feature>
<feature type="strand" evidence="5">
    <location>
        <begin position="150"/>
        <end position="158"/>
    </location>
</feature>
<feature type="helix" evidence="5">
    <location>
        <begin position="159"/>
        <end position="161"/>
    </location>
</feature>
<feature type="helix" evidence="5">
    <location>
        <begin position="162"/>
        <end position="167"/>
    </location>
</feature>
<feature type="helix" evidence="5">
    <location>
        <begin position="169"/>
        <end position="189"/>
    </location>
</feature>
<feature type="helix" evidence="5">
    <location>
        <begin position="205"/>
        <end position="216"/>
    </location>
</feature>
<feature type="helix" evidence="5">
    <location>
        <begin position="218"/>
        <end position="221"/>
    </location>
</feature>
<protein>
    <recommendedName>
        <fullName>Protein LST4</fullName>
    </recommendedName>
</protein>
<gene>
    <name type="primary">LST4</name>
    <name type="ordered locus">KLLA0A06622g</name>
</gene>
<dbReference type="EMBL" id="CR382121">
    <property type="protein sequence ID" value="CAH02883.1"/>
    <property type="molecule type" value="Genomic_DNA"/>
</dbReference>
<dbReference type="RefSeq" id="XP_451295.1">
    <property type="nucleotide sequence ID" value="XM_451295.1"/>
</dbReference>
<dbReference type="PDB" id="4ZY8">
    <property type="method" value="X-ray"/>
    <property type="resolution" value="2.14 A"/>
    <property type="chains" value="A/B/C/D=58-226"/>
</dbReference>
<dbReference type="PDBsum" id="4ZY8"/>
<dbReference type="SMR" id="Q6CXP4"/>
<dbReference type="FunCoup" id="Q6CXP4">
    <property type="interactions" value="63"/>
</dbReference>
<dbReference type="STRING" id="284590.Q6CXP4"/>
<dbReference type="PaxDb" id="284590-Q6CXP4"/>
<dbReference type="KEGG" id="kla:KLLA0_A06622g"/>
<dbReference type="eggNOG" id="ENOG502QPJF">
    <property type="taxonomic scope" value="Eukaryota"/>
</dbReference>
<dbReference type="HOGENOM" id="CLU_010482_0_0_1"/>
<dbReference type="InParanoid" id="Q6CXP4"/>
<dbReference type="OMA" id="SEYDEYP"/>
<dbReference type="Proteomes" id="UP000000598">
    <property type="component" value="Chromosome A"/>
</dbReference>
<dbReference type="GO" id="GO:0005737">
    <property type="term" value="C:cytoplasm"/>
    <property type="evidence" value="ECO:0007669"/>
    <property type="project" value="UniProtKB-ARBA"/>
</dbReference>
<dbReference type="GO" id="GO:0006865">
    <property type="term" value="P:amino acid transport"/>
    <property type="evidence" value="ECO:0007669"/>
    <property type="project" value="UniProtKB-KW"/>
</dbReference>
<dbReference type="GO" id="GO:0015031">
    <property type="term" value="P:protein transport"/>
    <property type="evidence" value="ECO:0007669"/>
    <property type="project" value="UniProtKB-KW"/>
</dbReference>
<dbReference type="InterPro" id="IPR037545">
    <property type="entry name" value="DENN_FNIP1/2"/>
</dbReference>
<dbReference type="InterPro" id="IPR041153">
    <property type="entry name" value="LST4_longin"/>
</dbReference>
<dbReference type="Pfam" id="PF18639">
    <property type="entry name" value="Longin_2"/>
    <property type="match status" value="1"/>
</dbReference>
<dbReference type="PROSITE" id="PS51836">
    <property type="entry name" value="DENN_FNIP12"/>
    <property type="match status" value="1"/>
</dbReference>
<comment type="function">
    <text evidence="1">Involved in extracellular amino acid uptake. Required for the protein trafficking from the Golgi to the plasma membrane (By similarity).</text>
</comment>
<comment type="similarity">
    <text evidence="4">Belongs to the LST4 family.</text>
</comment>
<organism>
    <name type="scientific">Kluyveromyces lactis (strain ATCC 8585 / CBS 2359 / DSM 70799 / NBRC 1267 / NRRL Y-1140 / WM37)</name>
    <name type="common">Yeast</name>
    <name type="synonym">Candida sphaerica</name>
    <dbReference type="NCBI Taxonomy" id="284590"/>
    <lineage>
        <taxon>Eukaryota</taxon>
        <taxon>Fungi</taxon>
        <taxon>Dikarya</taxon>
        <taxon>Ascomycota</taxon>
        <taxon>Saccharomycotina</taxon>
        <taxon>Saccharomycetes</taxon>
        <taxon>Saccharomycetales</taxon>
        <taxon>Saccharomycetaceae</taxon>
        <taxon>Kluyveromyces</taxon>
    </lineage>
</organism>
<proteinExistence type="evidence at protein level"/>